<comment type="function">
    <text evidence="1">Catalyzes the phosphorylation of pantothenate (Pan), the first step in CoA biosynthesis.</text>
</comment>
<comment type="catalytic activity">
    <reaction evidence="1">
        <text>(R)-pantothenate + ATP = (R)-4'-phosphopantothenate + ADP + H(+)</text>
        <dbReference type="Rhea" id="RHEA:16373"/>
        <dbReference type="ChEBI" id="CHEBI:10986"/>
        <dbReference type="ChEBI" id="CHEBI:15378"/>
        <dbReference type="ChEBI" id="CHEBI:29032"/>
        <dbReference type="ChEBI" id="CHEBI:30616"/>
        <dbReference type="ChEBI" id="CHEBI:456216"/>
        <dbReference type="EC" id="2.7.1.33"/>
    </reaction>
</comment>
<comment type="cofactor">
    <cofactor evidence="1">
        <name>NH4(+)</name>
        <dbReference type="ChEBI" id="CHEBI:28938"/>
    </cofactor>
    <cofactor evidence="1">
        <name>K(+)</name>
        <dbReference type="ChEBI" id="CHEBI:29103"/>
    </cofactor>
    <text evidence="1">A monovalent cation. Ammonium or potassium.</text>
</comment>
<comment type="pathway">
    <text evidence="1">Cofactor biosynthesis; coenzyme A biosynthesis; CoA from (R)-pantothenate: step 1/5.</text>
</comment>
<comment type="subunit">
    <text evidence="1">Homodimer.</text>
</comment>
<comment type="subcellular location">
    <subcellularLocation>
        <location evidence="1">Cytoplasm</location>
    </subcellularLocation>
</comment>
<comment type="similarity">
    <text evidence="1">Belongs to the type III pantothenate kinase family.</text>
</comment>
<evidence type="ECO:0000255" key="1">
    <source>
        <dbReference type="HAMAP-Rule" id="MF_01274"/>
    </source>
</evidence>
<sequence>MILELDCGNSFIKWRVISPGGRERICAGIVDSDDGLFEALAGSGVKVQRCRLVSVRSDAETEQLVTRLKASLGVEVVCAQSSSQVGGVRNGYHDYQRLGLDRWLALLGGYHLGQRACLVVDLGTAVTADFVSADGEHLGGFICPGLPLMRDQLSTHTRRIRYDREVALAALQELEPGRSTAEAVERGCLLMLRGFVAEQLAQARSRFPGGFEVFLTGGDAELVRDAVPEAQVVPDLVFVGLAIACPLS</sequence>
<proteinExistence type="inferred from homology"/>
<dbReference type="EC" id="2.7.1.33" evidence="1"/>
<dbReference type="EMBL" id="CP000680">
    <property type="protein sequence ID" value="ABP86672.1"/>
    <property type="molecule type" value="Genomic_DNA"/>
</dbReference>
<dbReference type="SMR" id="A4XZA6"/>
<dbReference type="STRING" id="399739.Pmen_3925"/>
<dbReference type="KEGG" id="pmy:Pmen_3925"/>
<dbReference type="PATRIC" id="fig|399739.8.peg.3978"/>
<dbReference type="eggNOG" id="COG1521">
    <property type="taxonomic scope" value="Bacteria"/>
</dbReference>
<dbReference type="HOGENOM" id="CLU_066627_0_1_6"/>
<dbReference type="OrthoDB" id="9781305at2"/>
<dbReference type="UniPathway" id="UPA00241">
    <property type="reaction ID" value="UER00352"/>
</dbReference>
<dbReference type="GO" id="GO:0005737">
    <property type="term" value="C:cytoplasm"/>
    <property type="evidence" value="ECO:0007669"/>
    <property type="project" value="UniProtKB-SubCell"/>
</dbReference>
<dbReference type="GO" id="GO:0005524">
    <property type="term" value="F:ATP binding"/>
    <property type="evidence" value="ECO:0007669"/>
    <property type="project" value="UniProtKB-UniRule"/>
</dbReference>
<dbReference type="GO" id="GO:0046872">
    <property type="term" value="F:metal ion binding"/>
    <property type="evidence" value="ECO:0007669"/>
    <property type="project" value="UniProtKB-KW"/>
</dbReference>
<dbReference type="GO" id="GO:0004594">
    <property type="term" value="F:pantothenate kinase activity"/>
    <property type="evidence" value="ECO:0007669"/>
    <property type="project" value="UniProtKB-UniRule"/>
</dbReference>
<dbReference type="GO" id="GO:0015937">
    <property type="term" value="P:coenzyme A biosynthetic process"/>
    <property type="evidence" value="ECO:0007669"/>
    <property type="project" value="UniProtKB-UniRule"/>
</dbReference>
<dbReference type="CDD" id="cd24015">
    <property type="entry name" value="ASKHA_NBD_PanK-III"/>
    <property type="match status" value="1"/>
</dbReference>
<dbReference type="Gene3D" id="3.30.420.40">
    <property type="match status" value="2"/>
</dbReference>
<dbReference type="HAMAP" id="MF_01274">
    <property type="entry name" value="Pantothen_kinase_3"/>
    <property type="match status" value="1"/>
</dbReference>
<dbReference type="InterPro" id="IPR043129">
    <property type="entry name" value="ATPase_NBD"/>
</dbReference>
<dbReference type="InterPro" id="IPR004619">
    <property type="entry name" value="Type_III_PanK"/>
</dbReference>
<dbReference type="NCBIfam" id="TIGR00671">
    <property type="entry name" value="baf"/>
    <property type="match status" value="1"/>
</dbReference>
<dbReference type="NCBIfam" id="NF009857">
    <property type="entry name" value="PRK13322.1-2"/>
    <property type="match status" value="1"/>
</dbReference>
<dbReference type="NCBIfam" id="NF009859">
    <property type="entry name" value="PRK13322.1-4"/>
    <property type="match status" value="1"/>
</dbReference>
<dbReference type="PANTHER" id="PTHR34265">
    <property type="entry name" value="TYPE III PANTOTHENATE KINASE"/>
    <property type="match status" value="1"/>
</dbReference>
<dbReference type="PANTHER" id="PTHR34265:SF1">
    <property type="entry name" value="TYPE III PANTOTHENATE KINASE"/>
    <property type="match status" value="1"/>
</dbReference>
<dbReference type="Pfam" id="PF03309">
    <property type="entry name" value="Pan_kinase"/>
    <property type="match status" value="1"/>
</dbReference>
<dbReference type="SUPFAM" id="SSF53067">
    <property type="entry name" value="Actin-like ATPase domain"/>
    <property type="match status" value="2"/>
</dbReference>
<accession>A4XZA6</accession>
<feature type="chain" id="PRO_1000054404" description="Type III pantothenate kinase">
    <location>
        <begin position="1"/>
        <end position="248"/>
    </location>
</feature>
<feature type="active site" description="Proton acceptor" evidence="1">
    <location>
        <position position="101"/>
    </location>
</feature>
<feature type="binding site" evidence="1">
    <location>
        <begin position="6"/>
        <end position="13"/>
    </location>
    <ligand>
        <name>ATP</name>
        <dbReference type="ChEBI" id="CHEBI:30616"/>
    </ligand>
</feature>
<feature type="binding site" evidence="1">
    <location>
        <position position="92"/>
    </location>
    <ligand>
        <name>substrate</name>
    </ligand>
</feature>
<feature type="binding site" evidence="1">
    <location>
        <begin position="99"/>
        <end position="102"/>
    </location>
    <ligand>
        <name>substrate</name>
    </ligand>
</feature>
<feature type="binding site" evidence="1">
    <location>
        <position position="121"/>
    </location>
    <ligand>
        <name>K(+)</name>
        <dbReference type="ChEBI" id="CHEBI:29103"/>
    </ligand>
</feature>
<feature type="binding site" evidence="1">
    <location>
        <position position="124"/>
    </location>
    <ligand>
        <name>ATP</name>
        <dbReference type="ChEBI" id="CHEBI:30616"/>
    </ligand>
</feature>
<feature type="binding site" evidence="1">
    <location>
        <position position="180"/>
    </location>
    <ligand>
        <name>substrate</name>
    </ligand>
</feature>
<organism>
    <name type="scientific">Ectopseudomonas mendocina (strain ymp)</name>
    <name type="common">Pseudomonas mendocina</name>
    <dbReference type="NCBI Taxonomy" id="399739"/>
    <lineage>
        <taxon>Bacteria</taxon>
        <taxon>Pseudomonadati</taxon>
        <taxon>Pseudomonadota</taxon>
        <taxon>Gammaproteobacteria</taxon>
        <taxon>Pseudomonadales</taxon>
        <taxon>Pseudomonadaceae</taxon>
        <taxon>Ectopseudomonas</taxon>
    </lineage>
</organism>
<keyword id="KW-0067">ATP-binding</keyword>
<keyword id="KW-0173">Coenzyme A biosynthesis</keyword>
<keyword id="KW-0963">Cytoplasm</keyword>
<keyword id="KW-0418">Kinase</keyword>
<keyword id="KW-0479">Metal-binding</keyword>
<keyword id="KW-0547">Nucleotide-binding</keyword>
<keyword id="KW-0630">Potassium</keyword>
<keyword id="KW-0808">Transferase</keyword>
<protein>
    <recommendedName>
        <fullName evidence="1">Type III pantothenate kinase</fullName>
        <ecNumber evidence="1">2.7.1.33</ecNumber>
    </recommendedName>
    <alternativeName>
        <fullName evidence="1">PanK-III</fullName>
    </alternativeName>
    <alternativeName>
        <fullName evidence="1">Pantothenic acid kinase</fullName>
    </alternativeName>
</protein>
<gene>
    <name evidence="1" type="primary">coaX</name>
    <name type="ordered locus">Pmen_3925</name>
</gene>
<name>COAX_ECTM1</name>
<reference key="1">
    <citation type="submission" date="2007-04" db="EMBL/GenBank/DDBJ databases">
        <title>Complete sequence of Pseudomonas mendocina ymp.</title>
        <authorList>
            <consortium name="US DOE Joint Genome Institute"/>
            <person name="Copeland A."/>
            <person name="Lucas S."/>
            <person name="Lapidus A."/>
            <person name="Barry K."/>
            <person name="Glavina del Rio T."/>
            <person name="Dalin E."/>
            <person name="Tice H."/>
            <person name="Pitluck S."/>
            <person name="Kiss H."/>
            <person name="Brettin T."/>
            <person name="Detter J.C."/>
            <person name="Bruce D."/>
            <person name="Han C."/>
            <person name="Schmutz J."/>
            <person name="Larimer F."/>
            <person name="Land M."/>
            <person name="Hauser L."/>
            <person name="Kyrpides N."/>
            <person name="Mikhailova N."/>
            <person name="Hersman L."/>
            <person name="Dubois J."/>
            <person name="Maurice P."/>
            <person name="Richardson P."/>
        </authorList>
    </citation>
    <scope>NUCLEOTIDE SEQUENCE [LARGE SCALE GENOMIC DNA]</scope>
    <source>
        <strain>ymp</strain>
    </source>
</reference>